<name>GANA_ASPOR</name>
<evidence type="ECO:0000250" key="1"/>
<evidence type="ECO:0000255" key="2"/>
<evidence type="ECO:0000305" key="3"/>
<keyword id="KW-0119">Carbohydrate metabolism</keyword>
<keyword id="KW-0961">Cell wall biogenesis/degradation</keyword>
<keyword id="KW-0326">Glycosidase</keyword>
<keyword id="KW-0378">Hydrolase</keyword>
<keyword id="KW-0624">Polysaccharide degradation</keyword>
<keyword id="KW-1185">Reference proteome</keyword>
<keyword id="KW-0964">Secreted</keyword>
<keyword id="KW-0732">Signal</keyword>
<protein>
    <recommendedName>
        <fullName>Probable arabinogalactan endo-beta-1,4-galactanase A</fullName>
        <ecNumber>3.2.1.89</ecNumber>
    </recommendedName>
    <alternativeName>
        <fullName>Endo-1,4-beta-galactanase A</fullName>
        <shortName>Galactanase A</shortName>
    </alternativeName>
</protein>
<organism>
    <name type="scientific">Aspergillus oryzae (strain ATCC 42149 / RIB 40)</name>
    <name type="common">Yellow koji mold</name>
    <dbReference type="NCBI Taxonomy" id="510516"/>
    <lineage>
        <taxon>Eukaryota</taxon>
        <taxon>Fungi</taxon>
        <taxon>Dikarya</taxon>
        <taxon>Ascomycota</taxon>
        <taxon>Pezizomycotina</taxon>
        <taxon>Eurotiomycetes</taxon>
        <taxon>Eurotiomycetidae</taxon>
        <taxon>Eurotiales</taxon>
        <taxon>Aspergillaceae</taxon>
        <taxon>Aspergillus</taxon>
        <taxon>Aspergillus subgen. Circumdati</taxon>
    </lineage>
</organism>
<gene>
    <name type="primary">galA</name>
    <name type="ORF">AO090001000492</name>
</gene>
<proteinExistence type="inferred from homology"/>
<comment type="function">
    <text evidence="1">Endogalactanase involved in the degradation of plant cell wall polysaccharides, and more particularly of hairy regions of pectin.</text>
</comment>
<comment type="catalytic activity">
    <reaction>
        <text>The enzyme specifically hydrolyzes (1-&gt;4)-beta-D-galactosidic linkages in type I arabinogalactans.</text>
        <dbReference type="EC" id="3.2.1.89"/>
    </reaction>
</comment>
<comment type="subcellular location">
    <subcellularLocation>
        <location evidence="1">Secreted</location>
    </subcellularLocation>
</comment>
<comment type="similarity">
    <text evidence="3">Belongs to the glycosyl hydrolase 53 family.</text>
</comment>
<reference key="1">
    <citation type="journal article" date="2005" name="Nature">
        <title>Genome sequencing and analysis of Aspergillus oryzae.</title>
        <authorList>
            <person name="Machida M."/>
            <person name="Asai K."/>
            <person name="Sano M."/>
            <person name="Tanaka T."/>
            <person name="Kumagai T."/>
            <person name="Terai G."/>
            <person name="Kusumoto K."/>
            <person name="Arima T."/>
            <person name="Akita O."/>
            <person name="Kashiwagi Y."/>
            <person name="Abe K."/>
            <person name="Gomi K."/>
            <person name="Horiuchi H."/>
            <person name="Kitamoto K."/>
            <person name="Kobayashi T."/>
            <person name="Takeuchi M."/>
            <person name="Denning D.W."/>
            <person name="Galagan J.E."/>
            <person name="Nierman W.C."/>
            <person name="Yu J."/>
            <person name="Archer D.B."/>
            <person name="Bennett J.W."/>
            <person name="Bhatnagar D."/>
            <person name="Cleveland T.E."/>
            <person name="Fedorova N.D."/>
            <person name="Gotoh O."/>
            <person name="Horikawa H."/>
            <person name="Hosoyama A."/>
            <person name="Ichinomiya M."/>
            <person name="Igarashi R."/>
            <person name="Iwashita K."/>
            <person name="Juvvadi P.R."/>
            <person name="Kato M."/>
            <person name="Kato Y."/>
            <person name="Kin T."/>
            <person name="Kokubun A."/>
            <person name="Maeda H."/>
            <person name="Maeyama N."/>
            <person name="Maruyama J."/>
            <person name="Nagasaki H."/>
            <person name="Nakajima T."/>
            <person name="Oda K."/>
            <person name="Okada K."/>
            <person name="Paulsen I."/>
            <person name="Sakamoto K."/>
            <person name="Sawano T."/>
            <person name="Takahashi M."/>
            <person name="Takase K."/>
            <person name="Terabayashi Y."/>
            <person name="Wortman J.R."/>
            <person name="Yamada O."/>
            <person name="Yamagata Y."/>
            <person name="Anazawa H."/>
            <person name="Hata Y."/>
            <person name="Koide Y."/>
            <person name="Komori T."/>
            <person name="Koyama Y."/>
            <person name="Minetoki T."/>
            <person name="Suharnan S."/>
            <person name="Tanaka A."/>
            <person name="Isono K."/>
            <person name="Kuhara S."/>
            <person name="Ogasawara N."/>
            <person name="Kikuchi H."/>
        </authorList>
    </citation>
    <scope>NUCLEOTIDE SEQUENCE [LARGE SCALE GENOMIC DNA]</scope>
    <source>
        <strain>ATCC 42149 / RIB 40</strain>
    </source>
</reference>
<accession>Q2UN61</accession>
<feature type="signal peptide" evidence="2">
    <location>
        <begin position="1"/>
        <end position="16"/>
    </location>
</feature>
<feature type="chain" id="PRO_0000394948" description="Probable arabinogalactan endo-beta-1,4-galactanase A">
    <location>
        <begin position="17"/>
        <end position="347"/>
    </location>
</feature>
<feature type="active site" description="Proton donor" evidence="1">
    <location>
        <position position="150"/>
    </location>
</feature>
<feature type="active site" description="Nucleophile" evidence="1">
    <location>
        <position position="260"/>
    </location>
</feature>
<sequence length="347" mass="38493">MLFSYLLATLPLLANAALTYKGADISSVFIEEKAGVAYKNLAGETQALEAILTDNGVNSIRQRVWVKNGDYDLTYNVNLAKRVAATGASIYLDLHYSDDWADPKHQTTPDGWSTDDINTLADQIYQYTLSVCNTFAEEKINVEIVSIGNEITSGLLWPLGKTPNYENIARLLHSGAWGVKDSKLATKPKILIHLDNGWDWDQQKYFYDTALGTGLLTSDDFDMIGVSYYPFYNEKATLASLKTSLTNIQTTYGKEVAVVETNWPVKCSSPEFAFPADLKDIPFSVDGQVTFLQRLAETLTATKASGFFYWEPAWTKNAGLGSSCEDNLLVDYNTNQVRNSVKAFGQV</sequence>
<dbReference type="EC" id="3.2.1.89"/>
<dbReference type="EMBL" id="BA000050">
    <property type="protein sequence ID" value="BAE57004.1"/>
    <property type="molecule type" value="Genomic_DNA"/>
</dbReference>
<dbReference type="RefSeq" id="XP_001819006.1">
    <property type="nucleotide sequence ID" value="XM_001818954.1"/>
</dbReference>
<dbReference type="SMR" id="Q2UN61"/>
<dbReference type="STRING" id="510516.Q2UN61"/>
<dbReference type="CAZy" id="GH53">
    <property type="family name" value="Glycoside Hydrolase Family 53"/>
</dbReference>
<dbReference type="EnsemblFungi" id="BAE57004">
    <property type="protein sequence ID" value="BAE57004"/>
    <property type="gene ID" value="AO090001000492"/>
</dbReference>
<dbReference type="GeneID" id="5990977"/>
<dbReference type="KEGG" id="aor:AO090001000492"/>
<dbReference type="VEuPathDB" id="FungiDB:AO090001000492"/>
<dbReference type="HOGENOM" id="CLU_011259_0_0_1"/>
<dbReference type="OMA" id="KYIHDEW"/>
<dbReference type="OrthoDB" id="71512at5052"/>
<dbReference type="Proteomes" id="UP000006564">
    <property type="component" value="Chromosome 2"/>
</dbReference>
<dbReference type="GO" id="GO:0005576">
    <property type="term" value="C:extracellular region"/>
    <property type="evidence" value="ECO:0000314"/>
    <property type="project" value="AspGD"/>
</dbReference>
<dbReference type="GO" id="GO:0031218">
    <property type="term" value="F:arabinogalactan endo-1,4-beta-galactosidase activity"/>
    <property type="evidence" value="ECO:0000250"/>
    <property type="project" value="UniProtKB"/>
</dbReference>
<dbReference type="GO" id="GO:0015926">
    <property type="term" value="F:glucosidase activity"/>
    <property type="evidence" value="ECO:0007669"/>
    <property type="project" value="InterPro"/>
</dbReference>
<dbReference type="GO" id="GO:0071555">
    <property type="term" value="P:cell wall organization"/>
    <property type="evidence" value="ECO:0007669"/>
    <property type="project" value="UniProtKB-KW"/>
</dbReference>
<dbReference type="GO" id="GO:0045490">
    <property type="term" value="P:pectin catabolic process"/>
    <property type="evidence" value="ECO:0000250"/>
    <property type="project" value="UniProtKB"/>
</dbReference>
<dbReference type="FunFam" id="3.20.20.80:FF:000077">
    <property type="entry name" value="Arabinogalactan endo-beta-1,4-galactanase"/>
    <property type="match status" value="1"/>
</dbReference>
<dbReference type="Gene3D" id="3.20.20.80">
    <property type="entry name" value="Glycosidases"/>
    <property type="match status" value="1"/>
</dbReference>
<dbReference type="InterPro" id="IPR011683">
    <property type="entry name" value="Glyco_hydro_53"/>
</dbReference>
<dbReference type="InterPro" id="IPR017853">
    <property type="entry name" value="Glycoside_hydrolase_SF"/>
</dbReference>
<dbReference type="PANTHER" id="PTHR34983">
    <property type="entry name" value="ARABINOGALACTAN ENDO-BETA-1,4-GALACTANASE A"/>
    <property type="match status" value="1"/>
</dbReference>
<dbReference type="PANTHER" id="PTHR34983:SF1">
    <property type="entry name" value="ARABINOGALACTAN ENDO-BETA-1,4-GALACTANASE A"/>
    <property type="match status" value="1"/>
</dbReference>
<dbReference type="Pfam" id="PF07745">
    <property type="entry name" value="Glyco_hydro_53"/>
    <property type="match status" value="1"/>
</dbReference>
<dbReference type="SUPFAM" id="SSF51445">
    <property type="entry name" value="(Trans)glycosidases"/>
    <property type="match status" value="1"/>
</dbReference>